<name>EDL3_ARATH</name>
<sequence>MLLEGRFSVVQMNTNRRLKFNQPSRLPNSGKSGIENERVLVLVFESISWDIHTLCTIASLSRRFCAIARRILWRRLCVNRAPGMVAALSGEDPSGRIDGGWHALAKLMFFCGGGESTRYFNLSQPTSGHFACESRFSKTSGRFFLPKNCRRDLLYMSDPCEHQAVGGDEHLGVFRGVFREFMRSKTRECLVRRQAALEEKVRCPYCGGRVWSMTAARLVPKSAARRLGSREGGLEFFVCVNGHLHGTCWLIPLSSEEEDNGEDDDNSDGSVI</sequence>
<reference key="1">
    <citation type="journal article" date="2000" name="Nature">
        <title>Sequence and analysis of chromosome 3 of the plant Arabidopsis thaliana.</title>
        <authorList>
            <person name="Salanoubat M."/>
            <person name="Lemcke K."/>
            <person name="Rieger M."/>
            <person name="Ansorge W."/>
            <person name="Unseld M."/>
            <person name="Fartmann B."/>
            <person name="Valle G."/>
            <person name="Bloecker H."/>
            <person name="Perez-Alonso M."/>
            <person name="Obermaier B."/>
            <person name="Delseny M."/>
            <person name="Boutry M."/>
            <person name="Grivell L.A."/>
            <person name="Mache R."/>
            <person name="Puigdomenech P."/>
            <person name="De Simone V."/>
            <person name="Choisne N."/>
            <person name="Artiguenave F."/>
            <person name="Robert C."/>
            <person name="Brottier P."/>
            <person name="Wincker P."/>
            <person name="Cattolico L."/>
            <person name="Weissenbach J."/>
            <person name="Saurin W."/>
            <person name="Quetier F."/>
            <person name="Schaefer M."/>
            <person name="Mueller-Auer S."/>
            <person name="Gabel C."/>
            <person name="Fuchs M."/>
            <person name="Benes V."/>
            <person name="Wurmbach E."/>
            <person name="Drzonek H."/>
            <person name="Erfle H."/>
            <person name="Jordan N."/>
            <person name="Bangert S."/>
            <person name="Wiedelmann R."/>
            <person name="Kranz H."/>
            <person name="Voss H."/>
            <person name="Holland R."/>
            <person name="Brandt P."/>
            <person name="Nyakatura G."/>
            <person name="Vezzi A."/>
            <person name="D'Angelo M."/>
            <person name="Pallavicini A."/>
            <person name="Toppo S."/>
            <person name="Simionati B."/>
            <person name="Conrad A."/>
            <person name="Hornischer K."/>
            <person name="Kauer G."/>
            <person name="Loehnert T.-H."/>
            <person name="Nordsiek G."/>
            <person name="Reichelt J."/>
            <person name="Scharfe M."/>
            <person name="Schoen O."/>
            <person name="Bargues M."/>
            <person name="Terol J."/>
            <person name="Climent J."/>
            <person name="Navarro P."/>
            <person name="Collado C."/>
            <person name="Perez-Perez A."/>
            <person name="Ottenwaelder B."/>
            <person name="Duchemin D."/>
            <person name="Cooke R."/>
            <person name="Laudie M."/>
            <person name="Berger-Llauro C."/>
            <person name="Purnelle B."/>
            <person name="Masuy D."/>
            <person name="de Haan M."/>
            <person name="Maarse A.C."/>
            <person name="Alcaraz J.-P."/>
            <person name="Cottet A."/>
            <person name="Casacuberta E."/>
            <person name="Monfort A."/>
            <person name="Argiriou A."/>
            <person name="Flores M."/>
            <person name="Liguori R."/>
            <person name="Vitale D."/>
            <person name="Mannhaupt G."/>
            <person name="Haase D."/>
            <person name="Schoof H."/>
            <person name="Rudd S."/>
            <person name="Zaccaria P."/>
            <person name="Mewes H.-W."/>
            <person name="Mayer K.F.X."/>
            <person name="Kaul S."/>
            <person name="Town C.D."/>
            <person name="Koo H.L."/>
            <person name="Tallon L.J."/>
            <person name="Jenkins J."/>
            <person name="Rooney T."/>
            <person name="Rizzo M."/>
            <person name="Walts A."/>
            <person name="Utterback T."/>
            <person name="Fujii C.Y."/>
            <person name="Shea T.P."/>
            <person name="Creasy T.H."/>
            <person name="Haas B."/>
            <person name="Maiti R."/>
            <person name="Wu D."/>
            <person name="Peterson J."/>
            <person name="Van Aken S."/>
            <person name="Pai G."/>
            <person name="Militscher J."/>
            <person name="Sellers P."/>
            <person name="Gill J.E."/>
            <person name="Feldblyum T.V."/>
            <person name="Preuss D."/>
            <person name="Lin X."/>
            <person name="Nierman W.C."/>
            <person name="Salzberg S.L."/>
            <person name="White O."/>
            <person name="Venter J.C."/>
            <person name="Fraser C.M."/>
            <person name="Kaneko T."/>
            <person name="Nakamura Y."/>
            <person name="Sato S."/>
            <person name="Kato T."/>
            <person name="Asamizu E."/>
            <person name="Sasamoto S."/>
            <person name="Kimura T."/>
            <person name="Idesawa K."/>
            <person name="Kawashima K."/>
            <person name="Kishida Y."/>
            <person name="Kiyokawa C."/>
            <person name="Kohara M."/>
            <person name="Matsumoto M."/>
            <person name="Matsuno A."/>
            <person name="Muraki A."/>
            <person name="Nakayama S."/>
            <person name="Nakazaki N."/>
            <person name="Shinpo S."/>
            <person name="Takeuchi C."/>
            <person name="Wada T."/>
            <person name="Watanabe A."/>
            <person name="Yamada M."/>
            <person name="Yasuda M."/>
            <person name="Tabata S."/>
        </authorList>
    </citation>
    <scope>NUCLEOTIDE SEQUENCE [LARGE SCALE GENOMIC DNA]</scope>
    <source>
        <strain>cv. Columbia</strain>
    </source>
</reference>
<reference key="2">
    <citation type="journal article" date="2017" name="Plant J.">
        <title>Araport11: a complete reannotation of the Arabidopsis thaliana reference genome.</title>
        <authorList>
            <person name="Cheng C.Y."/>
            <person name="Krishnakumar V."/>
            <person name="Chan A.P."/>
            <person name="Thibaud-Nissen F."/>
            <person name="Schobel S."/>
            <person name="Town C.D."/>
        </authorList>
    </citation>
    <scope>GENOME REANNOTATION</scope>
    <source>
        <strain>cv. Columbia</strain>
    </source>
</reference>
<reference key="3">
    <citation type="journal article" date="2003" name="Science">
        <title>Empirical analysis of transcriptional activity in the Arabidopsis genome.</title>
        <authorList>
            <person name="Yamada K."/>
            <person name="Lim J."/>
            <person name="Dale J.M."/>
            <person name="Chen H."/>
            <person name="Shinn P."/>
            <person name="Palm C.J."/>
            <person name="Southwick A.M."/>
            <person name="Wu H.C."/>
            <person name="Kim C.J."/>
            <person name="Nguyen M."/>
            <person name="Pham P.K."/>
            <person name="Cheuk R.F."/>
            <person name="Karlin-Newmann G."/>
            <person name="Liu S.X."/>
            <person name="Lam B."/>
            <person name="Sakano H."/>
            <person name="Wu T."/>
            <person name="Yu G."/>
            <person name="Miranda M."/>
            <person name="Quach H.L."/>
            <person name="Tripp M."/>
            <person name="Chang C.H."/>
            <person name="Lee J.M."/>
            <person name="Toriumi M.J."/>
            <person name="Chan M.M."/>
            <person name="Tang C.C."/>
            <person name="Onodera C.S."/>
            <person name="Deng J.M."/>
            <person name="Akiyama K."/>
            <person name="Ansari Y."/>
            <person name="Arakawa T."/>
            <person name="Banh J."/>
            <person name="Banno F."/>
            <person name="Bowser L."/>
            <person name="Brooks S.Y."/>
            <person name="Carninci P."/>
            <person name="Chao Q."/>
            <person name="Choy N."/>
            <person name="Enju A."/>
            <person name="Goldsmith A.D."/>
            <person name="Gurjal M."/>
            <person name="Hansen N.F."/>
            <person name="Hayashizaki Y."/>
            <person name="Johnson-Hopson C."/>
            <person name="Hsuan V.W."/>
            <person name="Iida K."/>
            <person name="Karnes M."/>
            <person name="Khan S."/>
            <person name="Koesema E."/>
            <person name="Ishida J."/>
            <person name="Jiang P.X."/>
            <person name="Jones T."/>
            <person name="Kawai J."/>
            <person name="Kamiya A."/>
            <person name="Meyers C."/>
            <person name="Nakajima M."/>
            <person name="Narusaka M."/>
            <person name="Seki M."/>
            <person name="Sakurai T."/>
            <person name="Satou M."/>
            <person name="Tamse R."/>
            <person name="Vaysberg M."/>
            <person name="Wallender E.K."/>
            <person name="Wong C."/>
            <person name="Yamamura Y."/>
            <person name="Yuan S."/>
            <person name="Shinozaki K."/>
            <person name="Davis R.W."/>
            <person name="Theologis A."/>
            <person name="Ecker J.R."/>
        </authorList>
    </citation>
    <scope>NUCLEOTIDE SEQUENCE [LARGE SCALE MRNA]</scope>
    <source>
        <strain>cv. Columbia</strain>
    </source>
</reference>
<reference key="4">
    <citation type="submission" date="2004-12" db="EMBL/GenBank/DDBJ databases">
        <title>Arabidopsis ORF clones.</title>
        <authorList>
            <person name="Shinn P."/>
            <person name="Chen H."/>
            <person name="Cheuk R.F."/>
            <person name="Kim C.J."/>
            <person name="Ecker J.R."/>
        </authorList>
    </citation>
    <scope>NUCLEOTIDE SEQUENCE [LARGE SCALE MRNA]</scope>
    <source>
        <strain>cv. Columbia</strain>
    </source>
</reference>
<evidence type="ECO:0000305" key="1"/>
<proteinExistence type="evidence at transcript level"/>
<gene>
    <name type="primary">EDL3</name>
    <name type="ordered locus">At3g63060</name>
    <name type="ORF">T20O10.160</name>
</gene>
<comment type="sequence caution" evidence="1">
    <conflict type="erroneous gene model prediction">
        <sequence resource="EMBL-CDS" id="CAB87751"/>
    </conflict>
</comment>
<keyword id="KW-1185">Reference proteome</keyword>
<feature type="chain" id="PRO_0000396019" description="EID1-like F-box protein 3">
    <location>
        <begin position="1"/>
        <end position="272"/>
    </location>
</feature>
<feature type="domain" description="F-box">
    <location>
        <begin position="29"/>
        <end position="81"/>
    </location>
</feature>
<dbReference type="EMBL" id="AL163816">
    <property type="protein sequence ID" value="CAB87751.1"/>
    <property type="status" value="ALT_SEQ"/>
    <property type="molecule type" value="Genomic_DNA"/>
</dbReference>
<dbReference type="EMBL" id="CP002686">
    <property type="protein sequence ID" value="AEE80430.1"/>
    <property type="molecule type" value="Genomic_DNA"/>
</dbReference>
<dbReference type="EMBL" id="AY056271">
    <property type="protein sequence ID" value="AAL07120.1"/>
    <property type="molecule type" value="mRNA"/>
</dbReference>
<dbReference type="EMBL" id="BT020425">
    <property type="protein sequence ID" value="AAW28552.1"/>
    <property type="molecule type" value="mRNA"/>
</dbReference>
<dbReference type="PIR" id="T48095">
    <property type="entry name" value="T48095"/>
</dbReference>
<dbReference type="RefSeq" id="NP_567137.1">
    <property type="nucleotide sequence ID" value="NM_116171.3"/>
</dbReference>
<dbReference type="BioGRID" id="10795">
    <property type="interactions" value="8"/>
</dbReference>
<dbReference type="FunCoup" id="Q93ZT5">
    <property type="interactions" value="3"/>
</dbReference>
<dbReference type="IntAct" id="Q93ZT5">
    <property type="interactions" value="1"/>
</dbReference>
<dbReference type="STRING" id="3702.Q93ZT5"/>
<dbReference type="PaxDb" id="3702-AT3G63060.1"/>
<dbReference type="EnsemblPlants" id="AT3G63060.1">
    <property type="protein sequence ID" value="AT3G63060.1"/>
    <property type="gene ID" value="AT3G63060"/>
</dbReference>
<dbReference type="GeneID" id="825481"/>
<dbReference type="Gramene" id="AT3G63060.1">
    <property type="protein sequence ID" value="AT3G63060.1"/>
    <property type="gene ID" value="AT3G63060"/>
</dbReference>
<dbReference type="KEGG" id="ath:AT3G63060"/>
<dbReference type="Araport" id="AT3G63060"/>
<dbReference type="TAIR" id="AT3G63060">
    <property type="gene designation" value="EDL3"/>
</dbReference>
<dbReference type="eggNOG" id="KOG1571">
    <property type="taxonomic scope" value="Eukaryota"/>
</dbReference>
<dbReference type="HOGENOM" id="CLU_065460_1_0_1"/>
<dbReference type="InParanoid" id="Q93ZT5"/>
<dbReference type="OMA" id="YCCGCES"/>
<dbReference type="PhylomeDB" id="Q93ZT5"/>
<dbReference type="PRO" id="PR:Q93ZT5"/>
<dbReference type="Proteomes" id="UP000006548">
    <property type="component" value="Chromosome 3"/>
</dbReference>
<dbReference type="ExpressionAtlas" id="Q93ZT5">
    <property type="expression patterns" value="baseline and differential"/>
</dbReference>
<dbReference type="GO" id="GO:0005634">
    <property type="term" value="C:nucleus"/>
    <property type="evidence" value="ECO:0000314"/>
    <property type="project" value="TAIR"/>
</dbReference>
<dbReference type="GO" id="GO:0009738">
    <property type="term" value="P:abscisic acid-activated signaling pathway"/>
    <property type="evidence" value="ECO:0000315"/>
    <property type="project" value="TAIR"/>
</dbReference>
<dbReference type="GO" id="GO:0010029">
    <property type="term" value="P:regulation of seed germination"/>
    <property type="evidence" value="ECO:0000315"/>
    <property type="project" value="TAIR"/>
</dbReference>
<dbReference type="GO" id="GO:0009737">
    <property type="term" value="P:response to abscisic acid"/>
    <property type="evidence" value="ECO:0000315"/>
    <property type="project" value="TAIR"/>
</dbReference>
<dbReference type="GO" id="GO:0006970">
    <property type="term" value="P:response to osmotic stress"/>
    <property type="evidence" value="ECO:0000315"/>
    <property type="project" value="TAIR"/>
</dbReference>
<dbReference type="GO" id="GO:0009651">
    <property type="term" value="P:response to salt stress"/>
    <property type="evidence" value="ECO:0000315"/>
    <property type="project" value="TAIR"/>
</dbReference>
<dbReference type="GO" id="GO:0009414">
    <property type="term" value="P:response to water deprivation"/>
    <property type="evidence" value="ECO:0000315"/>
    <property type="project" value="TAIR"/>
</dbReference>
<dbReference type="GO" id="GO:0010228">
    <property type="term" value="P:vegetative to reproductive phase transition of meristem"/>
    <property type="evidence" value="ECO:0000315"/>
    <property type="project" value="TAIR"/>
</dbReference>
<dbReference type="InterPro" id="IPR040267">
    <property type="entry name" value="EID1-like"/>
</dbReference>
<dbReference type="PANTHER" id="PTHR31348">
    <property type="entry name" value="EID1-LIKE F-BOX PROTEIN 2-RELATED"/>
    <property type="match status" value="1"/>
</dbReference>
<dbReference type="PANTHER" id="PTHR31348:SF3">
    <property type="entry name" value="EID1-LIKE F-BOX PROTEIN 3"/>
    <property type="match status" value="1"/>
</dbReference>
<accession>Q93ZT5</accession>
<accession>Q9LYB6</accession>
<protein>
    <recommendedName>
        <fullName>EID1-like F-box protein 3</fullName>
    </recommendedName>
</protein>
<organism>
    <name type="scientific">Arabidopsis thaliana</name>
    <name type="common">Mouse-ear cress</name>
    <dbReference type="NCBI Taxonomy" id="3702"/>
    <lineage>
        <taxon>Eukaryota</taxon>
        <taxon>Viridiplantae</taxon>
        <taxon>Streptophyta</taxon>
        <taxon>Embryophyta</taxon>
        <taxon>Tracheophyta</taxon>
        <taxon>Spermatophyta</taxon>
        <taxon>Magnoliopsida</taxon>
        <taxon>eudicotyledons</taxon>
        <taxon>Gunneridae</taxon>
        <taxon>Pentapetalae</taxon>
        <taxon>rosids</taxon>
        <taxon>malvids</taxon>
        <taxon>Brassicales</taxon>
        <taxon>Brassicaceae</taxon>
        <taxon>Camelineae</taxon>
        <taxon>Arabidopsis</taxon>
    </lineage>
</organism>